<organism>
    <name type="scientific">Arabidopsis thaliana</name>
    <name type="common">Mouse-ear cress</name>
    <dbReference type="NCBI Taxonomy" id="3702"/>
    <lineage>
        <taxon>Eukaryota</taxon>
        <taxon>Viridiplantae</taxon>
        <taxon>Streptophyta</taxon>
        <taxon>Embryophyta</taxon>
        <taxon>Tracheophyta</taxon>
        <taxon>Spermatophyta</taxon>
        <taxon>Magnoliopsida</taxon>
        <taxon>eudicotyledons</taxon>
        <taxon>Gunneridae</taxon>
        <taxon>Pentapetalae</taxon>
        <taxon>rosids</taxon>
        <taxon>malvids</taxon>
        <taxon>Brassicales</taxon>
        <taxon>Brassicaceae</taxon>
        <taxon>Camelineae</taxon>
        <taxon>Arabidopsis</taxon>
    </lineage>
</organism>
<proteinExistence type="evidence at protein level"/>
<keyword id="KW-0004">4Fe-4S</keyword>
<keyword id="KW-0150">Chloroplast</keyword>
<keyword id="KW-0408">Iron</keyword>
<keyword id="KW-0411">Iron-sulfur</keyword>
<keyword id="KW-0456">Lyase</keyword>
<keyword id="KW-0479">Metal-binding</keyword>
<keyword id="KW-0934">Plastid</keyword>
<keyword id="KW-0627">Porphyrin biosynthesis</keyword>
<keyword id="KW-1185">Reference proteome</keyword>
<keyword id="KW-0809">Transit peptide</keyword>
<dbReference type="EC" id="4.99.1.4" evidence="8"/>
<dbReference type="EMBL" id="AC007980">
    <property type="protein sequence ID" value="AAD50047.1"/>
    <property type="status" value="ALT_SEQ"/>
    <property type="molecule type" value="Genomic_DNA"/>
</dbReference>
<dbReference type="EMBL" id="CP002684">
    <property type="protein sequence ID" value="AEE32521.1"/>
    <property type="molecule type" value="Genomic_DNA"/>
</dbReference>
<dbReference type="EMBL" id="BT004060">
    <property type="protein sequence ID" value="AAO42090.1"/>
    <property type="molecule type" value="mRNA"/>
</dbReference>
<dbReference type="EMBL" id="BT005145">
    <property type="protein sequence ID" value="AAO50678.1"/>
    <property type="molecule type" value="mRNA"/>
</dbReference>
<dbReference type="EMBL" id="AY088838">
    <property type="protein sequence ID" value="AAM67145.1"/>
    <property type="molecule type" value="mRNA"/>
</dbReference>
<dbReference type="PIR" id="A96538">
    <property type="entry name" value="A96538"/>
</dbReference>
<dbReference type="RefSeq" id="NP_564562.1">
    <property type="nucleotide sequence ID" value="NM_103902.4"/>
</dbReference>
<dbReference type="SMR" id="Q84JH7"/>
<dbReference type="FunCoup" id="Q84JH7">
    <property type="interactions" value="800"/>
</dbReference>
<dbReference type="IntAct" id="Q84JH7">
    <property type="interactions" value="1"/>
</dbReference>
<dbReference type="STRING" id="3702.Q84JH7"/>
<dbReference type="PaxDb" id="3702-AT1G50170.1"/>
<dbReference type="ProteomicsDB" id="232535"/>
<dbReference type="EnsemblPlants" id="AT1G50170.1">
    <property type="protein sequence ID" value="AT1G50170.1"/>
    <property type="gene ID" value="AT1G50170"/>
</dbReference>
<dbReference type="GeneID" id="841439"/>
<dbReference type="Gramene" id="AT1G50170.1">
    <property type="protein sequence ID" value="AT1G50170.1"/>
    <property type="gene ID" value="AT1G50170"/>
</dbReference>
<dbReference type="KEGG" id="ath:AT1G50170"/>
<dbReference type="Araport" id="AT1G50170"/>
<dbReference type="TAIR" id="AT1G50170">
    <property type="gene designation" value="SIRB"/>
</dbReference>
<dbReference type="eggNOG" id="ENOG502RXIW">
    <property type="taxonomic scope" value="Eukaryota"/>
</dbReference>
<dbReference type="HOGENOM" id="CLU_065901_1_0_1"/>
<dbReference type="InParanoid" id="Q84JH7"/>
<dbReference type="PhylomeDB" id="Q84JH7"/>
<dbReference type="BRENDA" id="4.99.1.4">
    <property type="organism ID" value="399"/>
</dbReference>
<dbReference type="UniPathway" id="UPA00262">
    <property type="reaction ID" value="UER00376"/>
</dbReference>
<dbReference type="PRO" id="PR:Q84JH7"/>
<dbReference type="Proteomes" id="UP000006548">
    <property type="component" value="Chromosome 1"/>
</dbReference>
<dbReference type="ExpressionAtlas" id="Q84JH7">
    <property type="expression patterns" value="baseline and differential"/>
</dbReference>
<dbReference type="GO" id="GO:0009507">
    <property type="term" value="C:chloroplast"/>
    <property type="evidence" value="ECO:0000314"/>
    <property type="project" value="TAIR"/>
</dbReference>
<dbReference type="GO" id="GO:0051539">
    <property type="term" value="F:4 iron, 4 sulfur cluster binding"/>
    <property type="evidence" value="ECO:0007669"/>
    <property type="project" value="UniProtKB-KW"/>
</dbReference>
<dbReference type="GO" id="GO:0042802">
    <property type="term" value="F:identical protein binding"/>
    <property type="evidence" value="ECO:0000353"/>
    <property type="project" value="UniProtKB"/>
</dbReference>
<dbReference type="GO" id="GO:0051536">
    <property type="term" value="F:iron-sulfur cluster binding"/>
    <property type="evidence" value="ECO:0000314"/>
    <property type="project" value="UniProtKB"/>
</dbReference>
<dbReference type="GO" id="GO:0046872">
    <property type="term" value="F:metal ion binding"/>
    <property type="evidence" value="ECO:0007669"/>
    <property type="project" value="UniProtKB-KW"/>
</dbReference>
<dbReference type="GO" id="GO:0051266">
    <property type="term" value="F:sirohydrochlorin ferrochelatase activity"/>
    <property type="evidence" value="ECO:0000314"/>
    <property type="project" value="TAIR"/>
</dbReference>
<dbReference type="GO" id="GO:0006979">
    <property type="term" value="P:response to oxidative stress"/>
    <property type="evidence" value="ECO:0000315"/>
    <property type="project" value="TAIR"/>
</dbReference>
<dbReference type="GO" id="GO:0019354">
    <property type="term" value="P:siroheme biosynthetic process"/>
    <property type="evidence" value="ECO:0000314"/>
    <property type="project" value="TAIR"/>
</dbReference>
<dbReference type="CDD" id="cd03416">
    <property type="entry name" value="CbiX_SirB_N"/>
    <property type="match status" value="1"/>
</dbReference>
<dbReference type="FunFam" id="3.40.50.1400:FF:000021">
    <property type="entry name" value="Sirohydrochlorin ferrochelatase B"/>
    <property type="match status" value="1"/>
</dbReference>
<dbReference type="Gene3D" id="3.40.50.1400">
    <property type="match status" value="1"/>
</dbReference>
<dbReference type="InterPro" id="IPR002762">
    <property type="entry name" value="CbiX-like"/>
</dbReference>
<dbReference type="InterPro" id="IPR050963">
    <property type="entry name" value="Sirohydro_Cobaltochel/CbiX"/>
</dbReference>
<dbReference type="PANTHER" id="PTHR33542">
    <property type="entry name" value="SIROHYDROCHLORIN FERROCHELATASE, CHLOROPLASTIC"/>
    <property type="match status" value="1"/>
</dbReference>
<dbReference type="PANTHER" id="PTHR33542:SF3">
    <property type="entry name" value="SIROHYDROCHLORIN FERROCHELATASE, CHLOROPLASTIC"/>
    <property type="match status" value="1"/>
</dbReference>
<dbReference type="Pfam" id="PF01903">
    <property type="entry name" value="CbiX"/>
    <property type="match status" value="1"/>
</dbReference>
<dbReference type="SUPFAM" id="SSF53800">
    <property type="entry name" value="Chelatase"/>
    <property type="match status" value="1"/>
</dbReference>
<sequence>MTTQSQFLVNLSYGGLASQSNLRANNRVSPSSCQITRTNRSWALPVSFKVEKFQLQRGRRRRGSPCFGESEGLVKNGIGDADGIIIVDHGSRRRESNLMLEEFVKMFKEKTGYPIVEPAHMELAEPSIKDAFSLCVQQGAKRVVVSPFFLFPGRHWHTDIPSLTADAAKEFSGISYLITAPLGPHNLLLDVVNDRIQHCLSHVEGDADECLVCAGTNKCKLYNSS</sequence>
<evidence type="ECO:0000250" key="1">
    <source>
        <dbReference type="UniProtKB" id="O29537"/>
    </source>
</evidence>
<evidence type="ECO:0000255" key="2"/>
<evidence type="ECO:0000269" key="3">
    <source>
    </source>
</evidence>
<evidence type="ECO:0000269" key="4">
    <source>
    </source>
</evidence>
<evidence type="ECO:0000303" key="5">
    <source>
    </source>
</evidence>
<evidence type="ECO:0000303" key="6">
    <source>
    </source>
</evidence>
<evidence type="ECO:0000305" key="7"/>
<evidence type="ECO:0000305" key="8">
    <source>
    </source>
</evidence>
<evidence type="ECO:0000305" key="9">
    <source>
    </source>
</evidence>
<evidence type="ECO:0000312" key="10">
    <source>
        <dbReference type="Araport" id="AT1G50170"/>
    </source>
</evidence>
<evidence type="ECO:0000312" key="11">
    <source>
        <dbReference type="EMBL" id="AAD50047.1"/>
    </source>
</evidence>
<gene>
    <name evidence="5" type="primary">SIRB</name>
    <name evidence="10" type="ordered locus">At1g50170</name>
    <name evidence="11" type="ORF">F14I3.20</name>
</gene>
<name>SIRB_ARATH</name>
<reference key="1">
    <citation type="journal article" date="2000" name="Nature">
        <title>Sequence and analysis of chromosome 1 of the plant Arabidopsis thaliana.</title>
        <authorList>
            <person name="Theologis A."/>
            <person name="Ecker J.R."/>
            <person name="Palm C.J."/>
            <person name="Federspiel N.A."/>
            <person name="Kaul S."/>
            <person name="White O."/>
            <person name="Alonso J."/>
            <person name="Altafi H."/>
            <person name="Araujo R."/>
            <person name="Bowman C.L."/>
            <person name="Brooks S.Y."/>
            <person name="Buehler E."/>
            <person name="Chan A."/>
            <person name="Chao Q."/>
            <person name="Chen H."/>
            <person name="Cheuk R.F."/>
            <person name="Chin C.W."/>
            <person name="Chung M.K."/>
            <person name="Conn L."/>
            <person name="Conway A.B."/>
            <person name="Conway A.R."/>
            <person name="Creasy T.H."/>
            <person name="Dewar K."/>
            <person name="Dunn P."/>
            <person name="Etgu P."/>
            <person name="Feldblyum T.V."/>
            <person name="Feng J.-D."/>
            <person name="Fong B."/>
            <person name="Fujii C.Y."/>
            <person name="Gill J.E."/>
            <person name="Goldsmith A.D."/>
            <person name="Haas B."/>
            <person name="Hansen N.F."/>
            <person name="Hughes B."/>
            <person name="Huizar L."/>
            <person name="Hunter J.L."/>
            <person name="Jenkins J."/>
            <person name="Johnson-Hopson C."/>
            <person name="Khan S."/>
            <person name="Khaykin E."/>
            <person name="Kim C.J."/>
            <person name="Koo H.L."/>
            <person name="Kremenetskaia I."/>
            <person name="Kurtz D.B."/>
            <person name="Kwan A."/>
            <person name="Lam B."/>
            <person name="Langin-Hooper S."/>
            <person name="Lee A."/>
            <person name="Lee J.M."/>
            <person name="Lenz C.A."/>
            <person name="Li J.H."/>
            <person name="Li Y.-P."/>
            <person name="Lin X."/>
            <person name="Liu S.X."/>
            <person name="Liu Z.A."/>
            <person name="Luros J.S."/>
            <person name="Maiti R."/>
            <person name="Marziali A."/>
            <person name="Militscher J."/>
            <person name="Miranda M."/>
            <person name="Nguyen M."/>
            <person name="Nierman W.C."/>
            <person name="Osborne B.I."/>
            <person name="Pai G."/>
            <person name="Peterson J."/>
            <person name="Pham P.K."/>
            <person name="Rizzo M."/>
            <person name="Rooney T."/>
            <person name="Rowley D."/>
            <person name="Sakano H."/>
            <person name="Salzberg S.L."/>
            <person name="Schwartz J.R."/>
            <person name="Shinn P."/>
            <person name="Southwick A.M."/>
            <person name="Sun H."/>
            <person name="Tallon L.J."/>
            <person name="Tambunga G."/>
            <person name="Toriumi M.J."/>
            <person name="Town C.D."/>
            <person name="Utterback T."/>
            <person name="Van Aken S."/>
            <person name="Vaysberg M."/>
            <person name="Vysotskaia V.S."/>
            <person name="Walker M."/>
            <person name="Wu D."/>
            <person name="Yu G."/>
            <person name="Fraser C.M."/>
            <person name="Venter J.C."/>
            <person name="Davis R.W."/>
        </authorList>
    </citation>
    <scope>NUCLEOTIDE SEQUENCE [LARGE SCALE GENOMIC DNA]</scope>
    <source>
        <strain>cv. Columbia</strain>
    </source>
</reference>
<reference key="2">
    <citation type="journal article" date="2017" name="Plant J.">
        <title>Araport11: a complete reannotation of the Arabidopsis thaliana reference genome.</title>
        <authorList>
            <person name="Cheng C.Y."/>
            <person name="Krishnakumar V."/>
            <person name="Chan A.P."/>
            <person name="Thibaud-Nissen F."/>
            <person name="Schobel S."/>
            <person name="Town C.D."/>
        </authorList>
    </citation>
    <scope>GENOME REANNOTATION</scope>
    <source>
        <strain>cv. Columbia</strain>
    </source>
</reference>
<reference key="3">
    <citation type="journal article" date="2003" name="Science">
        <title>Empirical analysis of transcriptional activity in the Arabidopsis genome.</title>
        <authorList>
            <person name="Yamada K."/>
            <person name="Lim J."/>
            <person name="Dale J.M."/>
            <person name="Chen H."/>
            <person name="Shinn P."/>
            <person name="Palm C.J."/>
            <person name="Southwick A.M."/>
            <person name="Wu H.C."/>
            <person name="Kim C.J."/>
            <person name="Nguyen M."/>
            <person name="Pham P.K."/>
            <person name="Cheuk R.F."/>
            <person name="Karlin-Newmann G."/>
            <person name="Liu S.X."/>
            <person name="Lam B."/>
            <person name="Sakano H."/>
            <person name="Wu T."/>
            <person name="Yu G."/>
            <person name="Miranda M."/>
            <person name="Quach H.L."/>
            <person name="Tripp M."/>
            <person name="Chang C.H."/>
            <person name="Lee J.M."/>
            <person name="Toriumi M.J."/>
            <person name="Chan M.M."/>
            <person name="Tang C.C."/>
            <person name="Onodera C.S."/>
            <person name="Deng J.M."/>
            <person name="Akiyama K."/>
            <person name="Ansari Y."/>
            <person name="Arakawa T."/>
            <person name="Banh J."/>
            <person name="Banno F."/>
            <person name="Bowser L."/>
            <person name="Brooks S.Y."/>
            <person name="Carninci P."/>
            <person name="Chao Q."/>
            <person name="Choy N."/>
            <person name="Enju A."/>
            <person name="Goldsmith A.D."/>
            <person name="Gurjal M."/>
            <person name="Hansen N.F."/>
            <person name="Hayashizaki Y."/>
            <person name="Johnson-Hopson C."/>
            <person name="Hsuan V.W."/>
            <person name="Iida K."/>
            <person name="Karnes M."/>
            <person name="Khan S."/>
            <person name="Koesema E."/>
            <person name="Ishida J."/>
            <person name="Jiang P.X."/>
            <person name="Jones T."/>
            <person name="Kawai J."/>
            <person name="Kamiya A."/>
            <person name="Meyers C."/>
            <person name="Nakajima M."/>
            <person name="Narusaka M."/>
            <person name="Seki M."/>
            <person name="Sakurai T."/>
            <person name="Satou M."/>
            <person name="Tamse R."/>
            <person name="Vaysberg M."/>
            <person name="Wallender E.K."/>
            <person name="Wong C."/>
            <person name="Yamamura Y."/>
            <person name="Yuan S."/>
            <person name="Shinozaki K."/>
            <person name="Davis R.W."/>
            <person name="Theologis A."/>
            <person name="Ecker J.R."/>
        </authorList>
    </citation>
    <scope>NUCLEOTIDE SEQUENCE [LARGE SCALE MRNA]</scope>
    <source>
        <strain>cv. Columbia</strain>
    </source>
</reference>
<reference key="4">
    <citation type="submission" date="2002-03" db="EMBL/GenBank/DDBJ databases">
        <title>Full-length cDNA from Arabidopsis thaliana.</title>
        <authorList>
            <person name="Brover V.V."/>
            <person name="Troukhan M.E."/>
            <person name="Alexandrov N.A."/>
            <person name="Lu Y.-P."/>
            <person name="Flavell R.B."/>
            <person name="Feldmann K.A."/>
        </authorList>
    </citation>
    <scope>NUCLEOTIDE SEQUENCE [LARGE SCALE MRNA]</scope>
</reference>
<reference key="5">
    <citation type="journal article" date="2005" name="J. Biol. Chem.">
        <title>Identification and characterization of the terminal enzyme of siroheme biosynthesis from Arabidopsis thaliana: a plastid-located sirohydrochlorin ferrochelatase containing a 2FE-2S center.</title>
        <authorList>
            <person name="Raux-Deery E."/>
            <person name="Leech H.K."/>
            <person name="Nakrieko K.A."/>
            <person name="McLean K.J."/>
            <person name="Munro A.W."/>
            <person name="Heathcote P."/>
            <person name="Rigby S.E."/>
            <person name="Smith A.G."/>
            <person name="Warren M.J."/>
        </authorList>
    </citation>
    <scope>FUNCTION</scope>
    <scope>CATALYTIC ACTIVITY</scope>
    <scope>COFACTOR</scope>
    <scope>SUBCELLULAR LOCATION</scope>
</reference>
<reference key="6">
    <citation type="journal article" date="2012" name="Biochem. J.">
        <title>Characterization of the evolutionarily conserved iron-sulfur cluster of sirohydrochlorin ferrochelatase from Arabidopsis thaliana.</title>
        <authorList>
            <person name="Saha K."/>
            <person name="Webb M.E."/>
            <person name="Rigby S.E."/>
            <person name="Leech H.K."/>
            <person name="Warren M.J."/>
            <person name="Smith A.G."/>
        </authorList>
    </citation>
    <scope>FUNCTION</scope>
    <scope>SUBUNIT</scope>
    <scope>CHARACTERIZATION OF IRON-SULFUR CLUSTER</scope>
    <scope>DISRUPTION PHENOTYPE</scope>
    <scope>MUTAGENESIS OF CYS-135; CYS-199; CYS-210; CYS-213 AND CYS-219</scope>
</reference>
<accession>Q84JH7</accession>
<accession>Q8L8S7</accession>
<accession>Q9SX37</accession>
<feature type="transit peptide" description="Chloroplast" evidence="2">
    <location>
        <begin position="1"/>
        <end position="46"/>
    </location>
</feature>
<feature type="chain" id="PRO_0000435491" description="Sirohydrochlorin ferrochelatase, chloroplastic" evidence="2">
    <location>
        <begin position="47"/>
        <end position="225"/>
    </location>
</feature>
<feature type="binding site" evidence="1">
    <location>
        <position position="89"/>
    </location>
    <ligand>
        <name>Fe cation</name>
        <dbReference type="ChEBI" id="CHEBI:24875"/>
    </ligand>
</feature>
<feature type="binding site" evidence="1">
    <location>
        <position position="155"/>
    </location>
    <ligand>
        <name>Fe cation</name>
        <dbReference type="ChEBI" id="CHEBI:24875"/>
    </ligand>
</feature>
<feature type="binding site" evidence="9">
    <location>
        <position position="199"/>
    </location>
    <ligand>
        <name>[4Fe-4S] cluster</name>
        <dbReference type="ChEBI" id="CHEBI:49883"/>
        <label>1</label>
        <note>ligand shared between dimeric partners</note>
    </ligand>
</feature>
<feature type="binding site" evidence="9">
    <location>
        <position position="210"/>
    </location>
    <ligand>
        <name>[4Fe-4S] cluster</name>
        <dbReference type="ChEBI" id="CHEBI:49883"/>
        <label>1</label>
        <note>ligand shared between dimeric partners</note>
    </ligand>
</feature>
<feature type="binding site" evidence="9">
    <location>
        <position position="213"/>
    </location>
    <ligand>
        <name>[4Fe-4S] cluster</name>
        <dbReference type="ChEBI" id="CHEBI:49883"/>
        <label>2</label>
        <note>ligand shared between dimeric partners</note>
    </ligand>
</feature>
<feature type="binding site" evidence="9">
    <location>
        <position position="219"/>
    </location>
    <ligand>
        <name>[4Fe-4S] cluster</name>
        <dbReference type="ChEBI" id="CHEBI:49883"/>
        <label>2</label>
        <note>ligand shared between dimeric partners</note>
    </ligand>
</feature>
<feature type="mutagenesis site" description="No effect on the [4Fe-4S] cluster binding. No effect on enzymatic activity." evidence="4">
    <original>C</original>
    <variation>A</variation>
    <location>
        <position position="135"/>
    </location>
</feature>
<feature type="mutagenesis site" description="Impairs [4Fe-4S] cluster binding. No effect on enzymatic activity." evidence="4">
    <original>C</original>
    <variation>A</variation>
    <location>
        <position position="199"/>
    </location>
</feature>
<feature type="mutagenesis site" description="Impairs [4Fe-4S] cluster binding. No effect on enzymatic activity." evidence="4">
    <original>C</original>
    <variation>A</variation>
    <location>
        <position position="210"/>
    </location>
</feature>
<feature type="mutagenesis site" description="Impairs [4Fe-4S] cluster binding. No effect on enzymatic activity." evidence="4">
    <original>C</original>
    <variation>A</variation>
    <location>
        <position position="213"/>
    </location>
</feature>
<feature type="mutagenesis site" description="Impairs [4Fe-4S] cluster binding. No effect on enzymatic activity." evidence="4">
    <original>C</original>
    <variation>A</variation>
    <location>
        <position position="219"/>
    </location>
</feature>
<feature type="sequence conflict" description="In Ref. 4; AAM67145." evidence="7" ref="4">
    <original>E</original>
    <variation>D</variation>
    <location>
        <position position="109"/>
    </location>
</feature>
<feature type="sequence conflict" description="In Ref. 4; AAM67145." evidence="7" ref="4">
    <original>P</original>
    <variation>R</variation>
    <location>
        <position position="184"/>
    </location>
</feature>
<feature type="sequence conflict" description="In Ref. 4; AAM67145." evidence="7" ref="4">
    <original>N</original>
    <variation>K</variation>
    <location>
        <position position="217"/>
    </location>
</feature>
<comment type="function">
    <text evidence="3 4">Chelates iron to the siroheme precursor. Catalyzes the last step of the siroheme biosynthesis. Unlike its counterparts in bacteria, contains an [Fe-S] cluster which is not involved directly in the enzymatic reaction, but may play regulatory role in iron, sulfur and tetrapyrrole metabolism (PubMed:15545265, PubMed:22414210). The [Fe-S] cluster is required for normal plant growth (PubMed:22414210).</text>
</comment>
<comment type="catalytic activity">
    <reaction evidence="8">
        <text>siroheme + 2 H(+) = sirohydrochlorin + Fe(2+)</text>
        <dbReference type="Rhea" id="RHEA:24360"/>
        <dbReference type="ChEBI" id="CHEBI:15378"/>
        <dbReference type="ChEBI" id="CHEBI:29033"/>
        <dbReference type="ChEBI" id="CHEBI:58351"/>
        <dbReference type="ChEBI" id="CHEBI:60052"/>
        <dbReference type="EC" id="4.99.1.4"/>
    </reaction>
    <physiologicalReaction direction="right-to-left" evidence="8">
        <dbReference type="Rhea" id="RHEA:24362"/>
    </physiologicalReaction>
</comment>
<comment type="cofactor">
    <cofactor evidence="3 4">
        <name>[4Fe-4S] cluster</name>
        <dbReference type="ChEBI" id="CHEBI:49883"/>
    </cofactor>
    <text evidence="4">Binds 2 [4Fe-4S] clusters per dimer. The [4Fe-4S] cluster quickly oxidizes to a [2Fe-2S] form in the presence of oxygen.</text>
</comment>
<comment type="pathway">
    <text evidence="7">Porphyrin-containing compound metabolism; siroheme biosynthesis; siroheme from sirohydrochlorin: step 1/1.</text>
</comment>
<comment type="subunit">
    <text evidence="4">Homodimer.</text>
</comment>
<comment type="interaction">
    <interactant intactId="EBI-4424960">
        <id>Q84JH7</id>
    </interactant>
    <interactant intactId="EBI-4424954">
        <id>Q9M000</id>
        <label>SCL22</label>
    </interactant>
    <organismsDiffer>false</organismsDiffer>
    <experiments>4</experiments>
</comment>
<comment type="subcellular location">
    <subcellularLocation>
        <location evidence="3">Plastid</location>
        <location evidence="3">Chloroplast</location>
    </subcellularLocation>
</comment>
<comment type="disruption phenotype">
    <text evidence="4">Post-germination growth arrest.</text>
</comment>
<comment type="similarity">
    <text evidence="7">Belongs to the CbiX family. SirB subfamily.</text>
</comment>
<comment type="sequence caution" evidence="7">
    <conflict type="erroneous gene model prediction">
        <sequence resource="EMBL-CDS" id="AAD50047"/>
    </conflict>
</comment>
<protein>
    <recommendedName>
        <fullName evidence="5">Sirohydrochlorin ferrochelatase, chloroplastic</fullName>
        <shortName evidence="6">AtSirB</shortName>
        <ecNumber evidence="8">4.99.1.4</ecNumber>
    </recommendedName>
</protein>